<accession>Q7U8W4</accession>
<organism>
    <name type="scientific">Parasynechococcus marenigrum (strain WH8102)</name>
    <dbReference type="NCBI Taxonomy" id="84588"/>
    <lineage>
        <taxon>Bacteria</taxon>
        <taxon>Bacillati</taxon>
        <taxon>Cyanobacteriota</taxon>
        <taxon>Cyanophyceae</taxon>
        <taxon>Synechococcales</taxon>
        <taxon>Prochlorococcaceae</taxon>
        <taxon>Parasynechococcus</taxon>
        <taxon>Parasynechococcus marenigrum</taxon>
    </lineage>
</organism>
<keyword id="KW-0066">ATP synthesis</keyword>
<keyword id="KW-0139">CF(1)</keyword>
<keyword id="KW-0375">Hydrogen ion transport</keyword>
<keyword id="KW-0406">Ion transport</keyword>
<keyword id="KW-0472">Membrane</keyword>
<keyword id="KW-0793">Thylakoid</keyword>
<keyword id="KW-0813">Transport</keyword>
<sequence length="316" mass="34806">MANLKEIRDRIKSVKNTRKITEAMRLVAAAKVRRAQEQVLRSRPFADRLARILENLQSRMRFEDASSPLMEQRDVETITLVSVTGDRGLCGGYNANIIKRTEQRFAELTGKGFKVKLVLIGNKAIGYFTKRDYPVQATFSGLEQVPTADEANTISTDVLAEFIGAGTDRVELIFTKFINLVSCKPVVQTLLPLDPQDIADPEDEIFRLTTKDGRLTVEPGAGPANTEPKIPSDIVFEQTPEQLLNALLPLYLQNQLLRSLQESAASELASRMTAMNNASDNAKELAKTLTLDYNKARQAAITQEILEVAGGAAAVG</sequence>
<feature type="chain" id="PRO_0000073405" description="ATP synthase gamma chain">
    <location>
        <begin position="1"/>
        <end position="316"/>
    </location>
</feature>
<name>ATPG_PARMW</name>
<comment type="function">
    <text evidence="1">Produces ATP from ADP in the presence of a proton gradient across the membrane. The gamma chain is believed to be important in regulating ATPase activity and the flow of protons through the CF(0) complex.</text>
</comment>
<comment type="subunit">
    <text evidence="1">F-type ATPases have 2 components, CF(1) - the catalytic core - and CF(0) - the membrane proton channel. CF(1) has five subunits: alpha(3), beta(3), gamma(1), delta(1), epsilon(1). CF(0) has three main subunits: a, b and c.</text>
</comment>
<comment type="subcellular location">
    <subcellularLocation>
        <location evidence="1">Cellular thylakoid membrane</location>
        <topology evidence="1">Peripheral membrane protein</topology>
    </subcellularLocation>
</comment>
<comment type="similarity">
    <text evidence="1">Belongs to the ATPase gamma chain family.</text>
</comment>
<dbReference type="EMBL" id="BX569690">
    <property type="protein sequence ID" value="CAE07010.1"/>
    <property type="molecule type" value="Genomic_DNA"/>
</dbReference>
<dbReference type="RefSeq" id="WP_011127366.1">
    <property type="nucleotide sequence ID" value="NC_005070.1"/>
</dbReference>
<dbReference type="SMR" id="Q7U8W4"/>
<dbReference type="STRING" id="84588.SYNW0495"/>
<dbReference type="KEGG" id="syw:SYNW0495"/>
<dbReference type="eggNOG" id="COG0224">
    <property type="taxonomic scope" value="Bacteria"/>
</dbReference>
<dbReference type="HOGENOM" id="CLU_050669_0_0_3"/>
<dbReference type="Proteomes" id="UP000001422">
    <property type="component" value="Chromosome"/>
</dbReference>
<dbReference type="GO" id="GO:0031676">
    <property type="term" value="C:plasma membrane-derived thylakoid membrane"/>
    <property type="evidence" value="ECO:0007669"/>
    <property type="project" value="UniProtKB-SubCell"/>
</dbReference>
<dbReference type="GO" id="GO:0045259">
    <property type="term" value="C:proton-transporting ATP synthase complex"/>
    <property type="evidence" value="ECO:0007669"/>
    <property type="project" value="UniProtKB-KW"/>
</dbReference>
<dbReference type="GO" id="GO:0005524">
    <property type="term" value="F:ATP binding"/>
    <property type="evidence" value="ECO:0007669"/>
    <property type="project" value="UniProtKB-UniRule"/>
</dbReference>
<dbReference type="GO" id="GO:0046933">
    <property type="term" value="F:proton-transporting ATP synthase activity, rotational mechanism"/>
    <property type="evidence" value="ECO:0007669"/>
    <property type="project" value="UniProtKB-UniRule"/>
</dbReference>
<dbReference type="CDD" id="cd12151">
    <property type="entry name" value="F1-ATPase_gamma"/>
    <property type="match status" value="1"/>
</dbReference>
<dbReference type="FunFam" id="3.40.1380.10:FF:000006">
    <property type="entry name" value="ATP synthase gamma chain"/>
    <property type="match status" value="1"/>
</dbReference>
<dbReference type="FunFam" id="1.10.287.80:FF:000003">
    <property type="entry name" value="ATP synthase gamma chain, chloroplastic"/>
    <property type="match status" value="1"/>
</dbReference>
<dbReference type="Gene3D" id="3.40.1380.10">
    <property type="match status" value="1"/>
</dbReference>
<dbReference type="Gene3D" id="1.10.287.80">
    <property type="entry name" value="ATP synthase, gamma subunit, helix hairpin domain"/>
    <property type="match status" value="2"/>
</dbReference>
<dbReference type="HAMAP" id="MF_00815">
    <property type="entry name" value="ATP_synth_gamma_bact"/>
    <property type="match status" value="1"/>
</dbReference>
<dbReference type="InterPro" id="IPR035968">
    <property type="entry name" value="ATP_synth_F1_ATPase_gsu"/>
</dbReference>
<dbReference type="InterPro" id="IPR000131">
    <property type="entry name" value="ATP_synth_F1_gsu"/>
</dbReference>
<dbReference type="InterPro" id="IPR023632">
    <property type="entry name" value="ATP_synth_F1_gsu_CS"/>
</dbReference>
<dbReference type="NCBIfam" id="TIGR01146">
    <property type="entry name" value="ATPsyn_F1gamma"/>
    <property type="match status" value="1"/>
</dbReference>
<dbReference type="NCBIfam" id="NF004145">
    <property type="entry name" value="PRK05621.1-2"/>
    <property type="match status" value="1"/>
</dbReference>
<dbReference type="PANTHER" id="PTHR11693">
    <property type="entry name" value="ATP SYNTHASE GAMMA CHAIN"/>
    <property type="match status" value="1"/>
</dbReference>
<dbReference type="PANTHER" id="PTHR11693:SF41">
    <property type="entry name" value="ATP SYNTHASE GAMMA CHAIN, CHLOROPLASTIC"/>
    <property type="match status" value="1"/>
</dbReference>
<dbReference type="Pfam" id="PF00231">
    <property type="entry name" value="ATP-synt"/>
    <property type="match status" value="1"/>
</dbReference>
<dbReference type="PRINTS" id="PR00126">
    <property type="entry name" value="ATPASEGAMMA"/>
</dbReference>
<dbReference type="SUPFAM" id="SSF52943">
    <property type="entry name" value="ATP synthase (F1-ATPase), gamma subunit"/>
    <property type="match status" value="1"/>
</dbReference>
<dbReference type="PROSITE" id="PS00153">
    <property type="entry name" value="ATPASE_GAMMA"/>
    <property type="match status" value="1"/>
</dbReference>
<gene>
    <name evidence="1" type="primary">atpG</name>
    <name evidence="1" type="synonym">atpC</name>
    <name type="ordered locus">SYNW0495</name>
</gene>
<proteinExistence type="inferred from homology"/>
<reference key="1">
    <citation type="journal article" date="2003" name="Nature">
        <title>The genome of a motile marine Synechococcus.</title>
        <authorList>
            <person name="Palenik B."/>
            <person name="Brahamsha B."/>
            <person name="Larimer F.W."/>
            <person name="Land M.L."/>
            <person name="Hauser L."/>
            <person name="Chain P."/>
            <person name="Lamerdin J.E."/>
            <person name="Regala W."/>
            <person name="Allen E.E."/>
            <person name="McCarren J."/>
            <person name="Paulsen I.T."/>
            <person name="Dufresne A."/>
            <person name="Partensky F."/>
            <person name="Webb E.A."/>
            <person name="Waterbury J."/>
        </authorList>
    </citation>
    <scope>NUCLEOTIDE SEQUENCE [LARGE SCALE GENOMIC DNA]</scope>
    <source>
        <strain>WH8102</strain>
    </source>
</reference>
<protein>
    <recommendedName>
        <fullName evidence="1">ATP synthase gamma chain</fullName>
    </recommendedName>
    <alternativeName>
        <fullName evidence="1">ATP synthase F1 sector gamma subunit</fullName>
    </alternativeName>
    <alternativeName>
        <fullName evidence="1">F-ATPase gamma subunit</fullName>
    </alternativeName>
</protein>
<evidence type="ECO:0000255" key="1">
    <source>
        <dbReference type="HAMAP-Rule" id="MF_00815"/>
    </source>
</evidence>